<feature type="chain" id="PRO_0000190645" description="4-hydroxy-3-methylbut-2-en-1-yl diphosphate synthase (flavodoxin)">
    <location>
        <begin position="1"/>
        <end position="406"/>
    </location>
</feature>
<feature type="binding site" evidence="1">
    <location>
        <position position="297"/>
    </location>
    <ligand>
        <name>[4Fe-4S] cluster</name>
        <dbReference type="ChEBI" id="CHEBI:49883"/>
    </ligand>
</feature>
<feature type="binding site" evidence="1">
    <location>
        <position position="300"/>
    </location>
    <ligand>
        <name>[4Fe-4S] cluster</name>
        <dbReference type="ChEBI" id="CHEBI:49883"/>
    </ligand>
</feature>
<feature type="binding site" evidence="1">
    <location>
        <position position="343"/>
    </location>
    <ligand>
        <name>[4Fe-4S] cluster</name>
        <dbReference type="ChEBI" id="CHEBI:49883"/>
    </ligand>
</feature>
<feature type="binding site" evidence="1">
    <location>
        <position position="350"/>
    </location>
    <ligand>
        <name>[4Fe-4S] cluster</name>
        <dbReference type="ChEBI" id="CHEBI:49883"/>
    </ligand>
</feature>
<feature type="strand" evidence="2">
    <location>
        <begin position="11"/>
        <end position="13"/>
    </location>
</feature>
<feature type="strand" evidence="2">
    <location>
        <begin position="16"/>
        <end position="19"/>
    </location>
</feature>
<feature type="strand" evidence="2">
    <location>
        <begin position="25"/>
        <end position="29"/>
    </location>
</feature>
<feature type="helix" evidence="2">
    <location>
        <begin position="37"/>
        <end position="50"/>
    </location>
</feature>
<feature type="strand" evidence="2">
    <location>
        <begin position="53"/>
        <end position="58"/>
    </location>
</feature>
<feature type="helix" evidence="2">
    <location>
        <begin position="62"/>
        <end position="77"/>
    </location>
</feature>
<feature type="strand" evidence="2">
    <location>
        <begin position="84"/>
        <end position="87"/>
    </location>
</feature>
<feature type="helix" evidence="2">
    <location>
        <begin position="92"/>
        <end position="98"/>
    </location>
</feature>
<feature type="helix" evidence="2">
    <location>
        <begin position="100"/>
        <end position="105"/>
    </location>
</feature>
<feature type="strand" evidence="2">
    <location>
        <begin position="107"/>
        <end position="111"/>
    </location>
</feature>
<feature type="helix" evidence="2">
    <location>
        <begin position="120"/>
        <end position="136"/>
    </location>
</feature>
<feature type="strand" evidence="2">
    <location>
        <begin position="140"/>
        <end position="145"/>
    </location>
</feature>
<feature type="helix" evidence="2">
    <location>
        <begin position="146"/>
        <end position="148"/>
    </location>
</feature>
<feature type="helix" evidence="2">
    <location>
        <begin position="151"/>
        <end position="162"/>
    </location>
</feature>
<feature type="strand" evidence="2">
    <location>
        <begin position="164"/>
        <end position="166"/>
    </location>
</feature>
<feature type="helix" evidence="2">
    <location>
        <begin position="170"/>
        <end position="192"/>
    </location>
</feature>
<feature type="helix" evidence="2">
    <location>
        <begin position="196"/>
        <end position="198"/>
    </location>
</feature>
<feature type="strand" evidence="2">
    <location>
        <begin position="199"/>
        <end position="204"/>
    </location>
</feature>
<feature type="helix" evidence="2">
    <location>
        <begin position="208"/>
        <end position="221"/>
    </location>
</feature>
<feature type="strand" evidence="2">
    <location>
        <begin position="226"/>
        <end position="228"/>
    </location>
</feature>
<feature type="helix" evidence="2">
    <location>
        <begin position="236"/>
        <end position="252"/>
    </location>
</feature>
<feature type="strand" evidence="2">
    <location>
        <begin position="257"/>
        <end position="259"/>
    </location>
</feature>
<feature type="helix" evidence="2">
    <location>
        <begin position="273"/>
        <end position="284"/>
    </location>
</feature>
<feature type="strand" evidence="2">
    <location>
        <begin position="293"/>
        <end position="296"/>
    </location>
</feature>
<feature type="helix" evidence="2">
    <location>
        <begin position="305"/>
        <end position="329"/>
    </location>
</feature>
<feature type="helix" evidence="2">
    <location>
        <begin position="333"/>
        <end position="335"/>
    </location>
</feature>
<feature type="strand" evidence="2">
    <location>
        <begin position="337"/>
        <end position="343"/>
    </location>
</feature>
<feature type="turn" evidence="2">
    <location>
        <begin position="344"/>
        <end position="346"/>
    </location>
</feature>
<feature type="helix" evidence="2">
    <location>
        <begin position="347"/>
        <end position="353"/>
    </location>
</feature>
<feature type="strand" evidence="2">
    <location>
        <begin position="354"/>
        <end position="359"/>
    </location>
</feature>
<feature type="strand" evidence="2">
    <location>
        <begin position="369"/>
        <end position="373"/>
    </location>
</feature>
<feature type="strand" evidence="2">
    <location>
        <begin position="376"/>
        <end position="381"/>
    </location>
</feature>
<feature type="helix" evidence="2">
    <location>
        <begin position="386"/>
        <end position="401"/>
    </location>
</feature>
<comment type="function">
    <text evidence="1">Converts 2C-methyl-D-erythritol 2,4-cyclodiphosphate (ME-2,4cPP) into 1-hydroxy-2-methyl-2-(E)-butenyl 4-diphosphate.</text>
</comment>
<comment type="catalytic activity">
    <reaction evidence="1">
        <text>(2E)-4-hydroxy-3-methylbut-2-enyl diphosphate + oxidized [flavodoxin] + H2O + 2 H(+) = 2-C-methyl-D-erythritol 2,4-cyclic diphosphate + reduced [flavodoxin]</text>
        <dbReference type="Rhea" id="RHEA:43604"/>
        <dbReference type="Rhea" id="RHEA-COMP:10622"/>
        <dbReference type="Rhea" id="RHEA-COMP:10623"/>
        <dbReference type="ChEBI" id="CHEBI:15377"/>
        <dbReference type="ChEBI" id="CHEBI:15378"/>
        <dbReference type="ChEBI" id="CHEBI:57618"/>
        <dbReference type="ChEBI" id="CHEBI:58210"/>
        <dbReference type="ChEBI" id="CHEBI:58483"/>
        <dbReference type="ChEBI" id="CHEBI:128753"/>
        <dbReference type="EC" id="1.17.7.3"/>
    </reaction>
</comment>
<comment type="cofactor">
    <cofactor evidence="1">
        <name>[4Fe-4S] cluster</name>
        <dbReference type="ChEBI" id="CHEBI:49883"/>
    </cofactor>
    <text evidence="1">Binds 1 [4Fe-4S] cluster.</text>
</comment>
<comment type="pathway">
    <text evidence="1">Isoprenoid biosynthesis; isopentenyl diphosphate biosynthesis via DXP pathway; isopentenyl diphosphate from 1-deoxy-D-xylulose 5-phosphate: step 5/6.</text>
</comment>
<comment type="similarity">
    <text evidence="1">Belongs to the IspG family.</text>
</comment>
<accession>Q5SLI8</accession>
<name>ISPG_THET8</name>
<dbReference type="EC" id="1.17.7.3" evidence="1"/>
<dbReference type="EMBL" id="AP008226">
    <property type="protein sequence ID" value="BAD70128.1"/>
    <property type="molecule type" value="Genomic_DNA"/>
</dbReference>
<dbReference type="RefSeq" id="WP_011227844.1">
    <property type="nucleotide sequence ID" value="NC_006461.1"/>
</dbReference>
<dbReference type="RefSeq" id="YP_143571.1">
    <property type="nucleotide sequence ID" value="NC_006461.1"/>
</dbReference>
<dbReference type="PDB" id="4S38">
    <property type="method" value="X-ray"/>
    <property type="resolution" value="1.40 A"/>
    <property type="chains" value="A=1-406"/>
</dbReference>
<dbReference type="PDB" id="4S39">
    <property type="method" value="X-ray"/>
    <property type="resolution" value="1.30 A"/>
    <property type="chains" value="A=1-406"/>
</dbReference>
<dbReference type="PDB" id="4S3A">
    <property type="method" value="X-ray"/>
    <property type="resolution" value="1.60 A"/>
    <property type="chains" value="A=1-406"/>
</dbReference>
<dbReference type="PDB" id="4S3B">
    <property type="method" value="X-ray"/>
    <property type="resolution" value="1.80 A"/>
    <property type="chains" value="A=1-406"/>
</dbReference>
<dbReference type="PDB" id="4S3C">
    <property type="method" value="X-ray"/>
    <property type="resolution" value="1.45 A"/>
    <property type="chains" value="A=1-406"/>
</dbReference>
<dbReference type="PDB" id="4S3D">
    <property type="method" value="X-ray"/>
    <property type="resolution" value="1.80 A"/>
    <property type="chains" value="A=1-406"/>
</dbReference>
<dbReference type="PDB" id="4S3E">
    <property type="method" value="X-ray"/>
    <property type="resolution" value="1.35 A"/>
    <property type="chains" value="A=1-406"/>
</dbReference>
<dbReference type="PDB" id="4S3F">
    <property type="method" value="X-ray"/>
    <property type="resolution" value="1.70 A"/>
    <property type="chains" value="A=1-406"/>
</dbReference>
<dbReference type="PDBsum" id="4S38"/>
<dbReference type="PDBsum" id="4S39"/>
<dbReference type="PDBsum" id="4S3A"/>
<dbReference type="PDBsum" id="4S3B"/>
<dbReference type="PDBsum" id="4S3C"/>
<dbReference type="PDBsum" id="4S3D"/>
<dbReference type="PDBsum" id="4S3E"/>
<dbReference type="PDBsum" id="4S3F"/>
<dbReference type="SMR" id="Q5SLI8"/>
<dbReference type="EnsemblBacteria" id="BAD70128">
    <property type="protein sequence ID" value="BAD70128"/>
    <property type="gene ID" value="BAD70128"/>
</dbReference>
<dbReference type="GeneID" id="3168579"/>
<dbReference type="KEGG" id="ttj:TTHA0305"/>
<dbReference type="PATRIC" id="fig|300852.9.peg.305"/>
<dbReference type="eggNOG" id="COG0821">
    <property type="taxonomic scope" value="Bacteria"/>
</dbReference>
<dbReference type="HOGENOM" id="CLU_042258_1_0_0"/>
<dbReference type="PhylomeDB" id="Q5SLI8"/>
<dbReference type="UniPathway" id="UPA00056">
    <property type="reaction ID" value="UER00096"/>
</dbReference>
<dbReference type="EvolutionaryTrace" id="Q5SLI8"/>
<dbReference type="Proteomes" id="UP000000532">
    <property type="component" value="Chromosome"/>
</dbReference>
<dbReference type="GO" id="GO:0051539">
    <property type="term" value="F:4 iron, 4 sulfur cluster binding"/>
    <property type="evidence" value="ECO:0007669"/>
    <property type="project" value="UniProtKB-UniRule"/>
</dbReference>
<dbReference type="GO" id="GO:0046429">
    <property type="term" value="F:4-hydroxy-3-methylbut-2-en-1-yl diphosphate synthase activity (ferredoxin)"/>
    <property type="evidence" value="ECO:0007669"/>
    <property type="project" value="UniProtKB-UniRule"/>
</dbReference>
<dbReference type="GO" id="GO:0141197">
    <property type="term" value="F:4-hydroxy-3-methylbut-2-enyl-diphosphate synthase activity (flavodoxin)"/>
    <property type="evidence" value="ECO:0007669"/>
    <property type="project" value="UniProtKB-EC"/>
</dbReference>
<dbReference type="GO" id="GO:0005506">
    <property type="term" value="F:iron ion binding"/>
    <property type="evidence" value="ECO:0007669"/>
    <property type="project" value="InterPro"/>
</dbReference>
<dbReference type="GO" id="GO:0019288">
    <property type="term" value="P:isopentenyl diphosphate biosynthetic process, methylerythritol 4-phosphate pathway"/>
    <property type="evidence" value="ECO:0007669"/>
    <property type="project" value="UniProtKB-UniRule"/>
</dbReference>
<dbReference type="GO" id="GO:0016114">
    <property type="term" value="P:terpenoid biosynthetic process"/>
    <property type="evidence" value="ECO:0007669"/>
    <property type="project" value="InterPro"/>
</dbReference>
<dbReference type="FunFam" id="3.30.413.10:FF:000012">
    <property type="entry name" value="4-hydroxy-3-methylbut-2-en-1-yl diphosphate synthase (flavodoxin)"/>
    <property type="match status" value="1"/>
</dbReference>
<dbReference type="Gene3D" id="3.20.20.20">
    <property type="entry name" value="Dihydropteroate synthase-like"/>
    <property type="match status" value="1"/>
</dbReference>
<dbReference type="Gene3D" id="3.30.413.10">
    <property type="entry name" value="Sulfite Reductase Hemoprotein, domain 1"/>
    <property type="match status" value="1"/>
</dbReference>
<dbReference type="HAMAP" id="MF_00159">
    <property type="entry name" value="IspG"/>
    <property type="match status" value="1"/>
</dbReference>
<dbReference type="InterPro" id="IPR011005">
    <property type="entry name" value="Dihydropteroate_synth-like_sf"/>
</dbReference>
<dbReference type="InterPro" id="IPR016425">
    <property type="entry name" value="IspG_bac"/>
</dbReference>
<dbReference type="InterPro" id="IPR004588">
    <property type="entry name" value="IspG_bac-typ"/>
</dbReference>
<dbReference type="InterPro" id="IPR045854">
    <property type="entry name" value="NO2/SO3_Rdtase_4Fe4S_sf"/>
</dbReference>
<dbReference type="NCBIfam" id="TIGR00612">
    <property type="entry name" value="ispG_gcpE"/>
    <property type="match status" value="1"/>
</dbReference>
<dbReference type="NCBIfam" id="NF001540">
    <property type="entry name" value="PRK00366.1"/>
    <property type="match status" value="1"/>
</dbReference>
<dbReference type="PANTHER" id="PTHR30454">
    <property type="entry name" value="4-HYDROXY-3-METHYLBUT-2-EN-1-YL DIPHOSPHATE SYNTHASE"/>
    <property type="match status" value="1"/>
</dbReference>
<dbReference type="PANTHER" id="PTHR30454:SF0">
    <property type="entry name" value="4-HYDROXY-3-METHYLBUT-2-EN-1-YL DIPHOSPHATE SYNTHASE (FERREDOXIN), CHLOROPLASTIC"/>
    <property type="match status" value="1"/>
</dbReference>
<dbReference type="Pfam" id="PF04551">
    <property type="entry name" value="GcpE"/>
    <property type="match status" value="1"/>
</dbReference>
<dbReference type="PIRSF" id="PIRSF004640">
    <property type="entry name" value="IspG"/>
    <property type="match status" value="1"/>
</dbReference>
<dbReference type="SUPFAM" id="SSF51717">
    <property type="entry name" value="Dihydropteroate synthetase-like"/>
    <property type="match status" value="1"/>
</dbReference>
<dbReference type="SUPFAM" id="SSF56014">
    <property type="entry name" value="Nitrite and sulphite reductase 4Fe-4S domain-like"/>
    <property type="match status" value="1"/>
</dbReference>
<keyword id="KW-0002">3D-structure</keyword>
<keyword id="KW-0004">4Fe-4S</keyword>
<keyword id="KW-0408">Iron</keyword>
<keyword id="KW-0411">Iron-sulfur</keyword>
<keyword id="KW-0414">Isoprene biosynthesis</keyword>
<keyword id="KW-0479">Metal-binding</keyword>
<keyword id="KW-0560">Oxidoreductase</keyword>
<keyword id="KW-1185">Reference proteome</keyword>
<proteinExistence type="evidence at protein level"/>
<evidence type="ECO:0000255" key="1">
    <source>
        <dbReference type="HAMAP-Rule" id="MF_00159"/>
    </source>
</evidence>
<evidence type="ECO:0007829" key="2">
    <source>
        <dbReference type="PDB" id="4S39"/>
    </source>
</evidence>
<reference key="1">
    <citation type="submission" date="2004-11" db="EMBL/GenBank/DDBJ databases">
        <title>Complete genome sequence of Thermus thermophilus HB8.</title>
        <authorList>
            <person name="Masui R."/>
            <person name="Kurokawa K."/>
            <person name="Nakagawa N."/>
            <person name="Tokunaga F."/>
            <person name="Koyama Y."/>
            <person name="Shibata T."/>
            <person name="Oshima T."/>
            <person name="Yokoyama S."/>
            <person name="Yasunaga T."/>
            <person name="Kuramitsu S."/>
        </authorList>
    </citation>
    <scope>NUCLEOTIDE SEQUENCE [LARGE SCALE GENOMIC DNA]</scope>
    <source>
        <strain>ATCC 27634 / DSM 579 / HB8</strain>
    </source>
</reference>
<gene>
    <name evidence="1" type="primary">ispG</name>
    <name type="ordered locus">TTHA0305</name>
</gene>
<organism>
    <name type="scientific">Thermus thermophilus (strain ATCC 27634 / DSM 579 / HB8)</name>
    <dbReference type="NCBI Taxonomy" id="300852"/>
    <lineage>
        <taxon>Bacteria</taxon>
        <taxon>Thermotogati</taxon>
        <taxon>Deinococcota</taxon>
        <taxon>Deinococci</taxon>
        <taxon>Thermales</taxon>
        <taxon>Thermaceae</taxon>
        <taxon>Thermus</taxon>
    </lineage>
</organism>
<sequence length="406" mass="44171">MEGMRRPTPTVYVGRVPIGGAHPIAVQSMTNTPTRDVEATTAQVLELHRAGSEIVRLTVNDEEAAKAVPEIKRRLLAEGAEVPLVGDFHFNGHLLLRKYPKMAEALDKFRINPGTLGRGRHKDEHFAEMIRIAMDLGKPVRIGANWGSLDPALLTELMDRNARRPEPKSAHEVVLEALVESAVRAYEAALEMGLGEDKLVLSAKVSKARDLVWVYRELARRTQAPLHLGLTEAGMGVKGIVASAAALAPLLLEGIGDTIRVSLTPAPGEPRTKEVEVAQEILQALGLRAFAPEVTSCPGCGRTTSTFFQELAEEVSRRLKERLPEWRARYPGVEELKVAVMGCVVNGPGESKHAHIGISLPGAGEEPKAPVYADGKLLTILKGEGIAEEFLRLVEDYVKTRFAPKA</sequence>
<protein>
    <recommendedName>
        <fullName evidence="1">4-hydroxy-3-methylbut-2-en-1-yl diphosphate synthase (flavodoxin)</fullName>
        <ecNumber evidence="1">1.17.7.3</ecNumber>
    </recommendedName>
    <alternativeName>
        <fullName evidence="1">1-hydroxy-2-methyl-2-(E)-butenyl 4-diphosphate synthase</fullName>
    </alternativeName>
</protein>